<organism>
    <name type="scientific">Jannaschia sp. (strain CCS1)</name>
    <dbReference type="NCBI Taxonomy" id="290400"/>
    <lineage>
        <taxon>Bacteria</taxon>
        <taxon>Pseudomonadati</taxon>
        <taxon>Pseudomonadota</taxon>
        <taxon>Alphaproteobacteria</taxon>
        <taxon>Rhodobacterales</taxon>
        <taxon>Roseobacteraceae</taxon>
        <taxon>Jannaschia</taxon>
    </lineage>
</organism>
<feature type="chain" id="PRO_0000241609" description="Large ribosomal subunit protein uL24">
    <location>
        <begin position="1"/>
        <end position="101"/>
    </location>
</feature>
<sequence>MAAKLKKGDKVVVLTGKDKGKQGEISSVNPSAGKAIVDGVNIAIRHTKQSQSNQGGRIPQPMPIQLSNLALLDANGKATRVGFKIEDGKKVRVAKTTGDVI</sequence>
<comment type="function">
    <text evidence="1">One of two assembly initiator proteins, it binds directly to the 5'-end of the 23S rRNA, where it nucleates assembly of the 50S subunit.</text>
</comment>
<comment type="function">
    <text evidence="1">One of the proteins that surrounds the polypeptide exit tunnel on the outside of the subunit.</text>
</comment>
<comment type="subunit">
    <text evidence="1">Part of the 50S ribosomal subunit.</text>
</comment>
<comment type="similarity">
    <text evidence="1">Belongs to the universal ribosomal protein uL24 family.</text>
</comment>
<name>RL24_JANSC</name>
<evidence type="ECO:0000255" key="1">
    <source>
        <dbReference type="HAMAP-Rule" id="MF_01326"/>
    </source>
</evidence>
<evidence type="ECO:0000305" key="2"/>
<reference key="1">
    <citation type="submission" date="2006-02" db="EMBL/GenBank/DDBJ databases">
        <title>Complete sequence of chromosome of Jannaschia sp. CCS1.</title>
        <authorList>
            <consortium name="US DOE Joint Genome Institute"/>
            <person name="Copeland A."/>
            <person name="Lucas S."/>
            <person name="Lapidus A."/>
            <person name="Barry K."/>
            <person name="Detter J.C."/>
            <person name="Glavina del Rio T."/>
            <person name="Hammon N."/>
            <person name="Israni S."/>
            <person name="Pitluck S."/>
            <person name="Brettin T."/>
            <person name="Bruce D."/>
            <person name="Han C."/>
            <person name="Tapia R."/>
            <person name="Gilna P."/>
            <person name="Chertkov O."/>
            <person name="Saunders E."/>
            <person name="Schmutz J."/>
            <person name="Larimer F."/>
            <person name="Land M."/>
            <person name="Kyrpides N."/>
            <person name="Lykidis A."/>
            <person name="Moran M.A."/>
            <person name="Belas R."/>
            <person name="Ye W."/>
            <person name="Buchan A."/>
            <person name="Gonzalez J.M."/>
            <person name="Schell M.A."/>
            <person name="Richardson P."/>
        </authorList>
    </citation>
    <scope>NUCLEOTIDE SEQUENCE [LARGE SCALE GENOMIC DNA]</scope>
    <source>
        <strain>CCS1</strain>
    </source>
</reference>
<proteinExistence type="inferred from homology"/>
<dbReference type="EMBL" id="CP000264">
    <property type="protein sequence ID" value="ABD53519.1"/>
    <property type="molecule type" value="Genomic_DNA"/>
</dbReference>
<dbReference type="RefSeq" id="WP_011453727.1">
    <property type="nucleotide sequence ID" value="NC_007802.1"/>
</dbReference>
<dbReference type="SMR" id="Q28UU3"/>
<dbReference type="STRING" id="290400.Jann_0602"/>
<dbReference type="KEGG" id="jan:Jann_0602"/>
<dbReference type="eggNOG" id="COG0198">
    <property type="taxonomic scope" value="Bacteria"/>
</dbReference>
<dbReference type="HOGENOM" id="CLU_093315_2_2_5"/>
<dbReference type="OrthoDB" id="9807419at2"/>
<dbReference type="Proteomes" id="UP000008326">
    <property type="component" value="Chromosome"/>
</dbReference>
<dbReference type="GO" id="GO:1990904">
    <property type="term" value="C:ribonucleoprotein complex"/>
    <property type="evidence" value="ECO:0007669"/>
    <property type="project" value="UniProtKB-KW"/>
</dbReference>
<dbReference type="GO" id="GO:0005840">
    <property type="term" value="C:ribosome"/>
    <property type="evidence" value="ECO:0007669"/>
    <property type="project" value="UniProtKB-KW"/>
</dbReference>
<dbReference type="GO" id="GO:0019843">
    <property type="term" value="F:rRNA binding"/>
    <property type="evidence" value="ECO:0007669"/>
    <property type="project" value="UniProtKB-UniRule"/>
</dbReference>
<dbReference type="GO" id="GO:0003735">
    <property type="term" value="F:structural constituent of ribosome"/>
    <property type="evidence" value="ECO:0007669"/>
    <property type="project" value="InterPro"/>
</dbReference>
<dbReference type="GO" id="GO:0006412">
    <property type="term" value="P:translation"/>
    <property type="evidence" value="ECO:0007669"/>
    <property type="project" value="UniProtKB-UniRule"/>
</dbReference>
<dbReference type="CDD" id="cd06089">
    <property type="entry name" value="KOW_RPL26"/>
    <property type="match status" value="1"/>
</dbReference>
<dbReference type="Gene3D" id="2.30.30.30">
    <property type="match status" value="1"/>
</dbReference>
<dbReference type="HAMAP" id="MF_01326_B">
    <property type="entry name" value="Ribosomal_uL24_B"/>
    <property type="match status" value="1"/>
</dbReference>
<dbReference type="InterPro" id="IPR005824">
    <property type="entry name" value="KOW"/>
</dbReference>
<dbReference type="InterPro" id="IPR014722">
    <property type="entry name" value="Rib_uL2_dom2"/>
</dbReference>
<dbReference type="InterPro" id="IPR003256">
    <property type="entry name" value="Ribosomal_uL24"/>
</dbReference>
<dbReference type="InterPro" id="IPR005825">
    <property type="entry name" value="Ribosomal_uL24_CS"/>
</dbReference>
<dbReference type="InterPro" id="IPR041988">
    <property type="entry name" value="Ribosomal_uL24_KOW"/>
</dbReference>
<dbReference type="InterPro" id="IPR008991">
    <property type="entry name" value="Translation_prot_SH3-like_sf"/>
</dbReference>
<dbReference type="NCBIfam" id="TIGR01079">
    <property type="entry name" value="rplX_bact"/>
    <property type="match status" value="1"/>
</dbReference>
<dbReference type="PANTHER" id="PTHR12903">
    <property type="entry name" value="MITOCHONDRIAL RIBOSOMAL PROTEIN L24"/>
    <property type="match status" value="1"/>
</dbReference>
<dbReference type="Pfam" id="PF00467">
    <property type="entry name" value="KOW"/>
    <property type="match status" value="1"/>
</dbReference>
<dbReference type="Pfam" id="PF17136">
    <property type="entry name" value="ribosomal_L24"/>
    <property type="match status" value="1"/>
</dbReference>
<dbReference type="SMART" id="SM00739">
    <property type="entry name" value="KOW"/>
    <property type="match status" value="1"/>
</dbReference>
<dbReference type="SUPFAM" id="SSF50104">
    <property type="entry name" value="Translation proteins SH3-like domain"/>
    <property type="match status" value="1"/>
</dbReference>
<dbReference type="PROSITE" id="PS01108">
    <property type="entry name" value="RIBOSOMAL_L24"/>
    <property type="match status" value="1"/>
</dbReference>
<keyword id="KW-1185">Reference proteome</keyword>
<keyword id="KW-0687">Ribonucleoprotein</keyword>
<keyword id="KW-0689">Ribosomal protein</keyword>
<keyword id="KW-0694">RNA-binding</keyword>
<keyword id="KW-0699">rRNA-binding</keyword>
<gene>
    <name evidence="1" type="primary">rplX</name>
    <name type="ordered locus">Jann_0602</name>
</gene>
<protein>
    <recommendedName>
        <fullName evidence="1">Large ribosomal subunit protein uL24</fullName>
    </recommendedName>
    <alternativeName>
        <fullName evidence="2">50S ribosomal protein L24</fullName>
    </alternativeName>
</protein>
<accession>Q28UU3</accession>